<protein>
    <recommendedName>
        <fullName evidence="1">Small ribosomal subunit biogenesis GTPase RsgA 1</fullName>
        <ecNumber evidence="1">3.6.1.-</ecNumber>
    </recommendedName>
</protein>
<name>RSGA1_VIBVY</name>
<evidence type="ECO:0000255" key="1">
    <source>
        <dbReference type="HAMAP-Rule" id="MF_01820"/>
    </source>
</evidence>
<evidence type="ECO:0000255" key="2">
    <source>
        <dbReference type="PROSITE-ProRule" id="PRU01058"/>
    </source>
</evidence>
<evidence type="ECO:0000256" key="3">
    <source>
        <dbReference type="SAM" id="MobiDB-lite"/>
    </source>
</evidence>
<feature type="chain" id="PRO_0000171544" description="Small ribosomal subunit biogenesis GTPase RsgA 1">
    <location>
        <begin position="1"/>
        <end position="352"/>
    </location>
</feature>
<feature type="domain" description="CP-type G" evidence="2">
    <location>
        <begin position="104"/>
        <end position="272"/>
    </location>
</feature>
<feature type="region of interest" description="Disordered" evidence="3">
    <location>
        <begin position="1"/>
        <end position="24"/>
    </location>
</feature>
<feature type="binding site" evidence="1">
    <location>
        <begin position="160"/>
        <end position="163"/>
    </location>
    <ligand>
        <name>GTP</name>
        <dbReference type="ChEBI" id="CHEBI:37565"/>
    </ligand>
</feature>
<feature type="binding site" evidence="1">
    <location>
        <begin position="214"/>
        <end position="222"/>
    </location>
    <ligand>
        <name>GTP</name>
        <dbReference type="ChEBI" id="CHEBI:37565"/>
    </ligand>
</feature>
<feature type="binding site" evidence="1">
    <location>
        <position position="296"/>
    </location>
    <ligand>
        <name>Zn(2+)</name>
        <dbReference type="ChEBI" id="CHEBI:29105"/>
    </ligand>
</feature>
<feature type="binding site" evidence="1">
    <location>
        <position position="301"/>
    </location>
    <ligand>
        <name>Zn(2+)</name>
        <dbReference type="ChEBI" id="CHEBI:29105"/>
    </ligand>
</feature>
<feature type="binding site" evidence="1">
    <location>
        <position position="303"/>
    </location>
    <ligand>
        <name>Zn(2+)</name>
        <dbReference type="ChEBI" id="CHEBI:29105"/>
    </ligand>
</feature>
<feature type="binding site" evidence="1">
    <location>
        <position position="309"/>
    </location>
    <ligand>
        <name>Zn(2+)</name>
        <dbReference type="ChEBI" id="CHEBI:29105"/>
    </ligand>
</feature>
<accession>Q7MGZ6</accession>
<sequence>MAKKKKLTQGQVRRVRDNQQKRLKKQADTIQWDEAMLGDSRRGLVITRFGQHADIEDAETGLIERCNLRRGIESLVSGDKVIWRKGLESMAGISGVVEAVEPRTSVLTRPDYYDGLKPVAANIDQMVIVSSVLPELSLNIIDRYLIAAETLGIEPLLVLNKIDLLQEAELATYREWLADYEKIGYKILYVSKRSGAGIAELEAQLQDRINIFVGQSGVGKSSLVNALIPELDIEEGEISELSGLGQHTTTAARLYHIPSGGNLIDSPGVREFGLWHLEPEEITKAYLEFRPYLGGCKFRDCKHADDPGCIIREAVENGEISEVRYDNYHRIIESMAENKANRQYSRNKKADL</sequence>
<gene>
    <name evidence="1" type="primary">rsgA1</name>
    <name type="ordered locus">VV3077</name>
</gene>
<keyword id="KW-0963">Cytoplasm</keyword>
<keyword id="KW-0342">GTP-binding</keyword>
<keyword id="KW-0378">Hydrolase</keyword>
<keyword id="KW-0479">Metal-binding</keyword>
<keyword id="KW-0547">Nucleotide-binding</keyword>
<keyword id="KW-0690">Ribosome biogenesis</keyword>
<keyword id="KW-0694">RNA-binding</keyword>
<keyword id="KW-0699">rRNA-binding</keyword>
<keyword id="KW-0862">Zinc</keyword>
<dbReference type="EC" id="3.6.1.-" evidence="1"/>
<dbReference type="EMBL" id="BA000037">
    <property type="protein sequence ID" value="BAC95842.1"/>
    <property type="molecule type" value="Genomic_DNA"/>
</dbReference>
<dbReference type="SMR" id="Q7MGZ6"/>
<dbReference type="STRING" id="672.VV93_v1c28060"/>
<dbReference type="KEGG" id="vvy:VV3077"/>
<dbReference type="PATRIC" id="fig|196600.6.peg.3055"/>
<dbReference type="eggNOG" id="COG1162">
    <property type="taxonomic scope" value="Bacteria"/>
</dbReference>
<dbReference type="HOGENOM" id="CLU_033617_2_0_6"/>
<dbReference type="Proteomes" id="UP000002675">
    <property type="component" value="Chromosome I"/>
</dbReference>
<dbReference type="GO" id="GO:0005737">
    <property type="term" value="C:cytoplasm"/>
    <property type="evidence" value="ECO:0007669"/>
    <property type="project" value="UniProtKB-SubCell"/>
</dbReference>
<dbReference type="GO" id="GO:0005525">
    <property type="term" value="F:GTP binding"/>
    <property type="evidence" value="ECO:0007669"/>
    <property type="project" value="UniProtKB-UniRule"/>
</dbReference>
<dbReference type="GO" id="GO:0003924">
    <property type="term" value="F:GTPase activity"/>
    <property type="evidence" value="ECO:0007669"/>
    <property type="project" value="UniProtKB-UniRule"/>
</dbReference>
<dbReference type="GO" id="GO:0046872">
    <property type="term" value="F:metal ion binding"/>
    <property type="evidence" value="ECO:0007669"/>
    <property type="project" value="UniProtKB-KW"/>
</dbReference>
<dbReference type="GO" id="GO:0019843">
    <property type="term" value="F:rRNA binding"/>
    <property type="evidence" value="ECO:0007669"/>
    <property type="project" value="UniProtKB-KW"/>
</dbReference>
<dbReference type="GO" id="GO:0042274">
    <property type="term" value="P:ribosomal small subunit biogenesis"/>
    <property type="evidence" value="ECO:0007669"/>
    <property type="project" value="UniProtKB-UniRule"/>
</dbReference>
<dbReference type="CDD" id="cd01854">
    <property type="entry name" value="YjeQ_EngC"/>
    <property type="match status" value="1"/>
</dbReference>
<dbReference type="Gene3D" id="2.40.50.140">
    <property type="entry name" value="Nucleic acid-binding proteins"/>
    <property type="match status" value="1"/>
</dbReference>
<dbReference type="Gene3D" id="3.40.50.300">
    <property type="entry name" value="P-loop containing nucleotide triphosphate hydrolases"/>
    <property type="match status" value="1"/>
</dbReference>
<dbReference type="Gene3D" id="1.10.40.50">
    <property type="entry name" value="Probable gtpase engc, domain 3"/>
    <property type="match status" value="1"/>
</dbReference>
<dbReference type="HAMAP" id="MF_01820">
    <property type="entry name" value="GTPase_RsgA"/>
    <property type="match status" value="1"/>
</dbReference>
<dbReference type="InterPro" id="IPR030378">
    <property type="entry name" value="G_CP_dom"/>
</dbReference>
<dbReference type="InterPro" id="IPR012340">
    <property type="entry name" value="NA-bd_OB-fold"/>
</dbReference>
<dbReference type="InterPro" id="IPR027417">
    <property type="entry name" value="P-loop_NTPase"/>
</dbReference>
<dbReference type="InterPro" id="IPR004881">
    <property type="entry name" value="Ribosome_biogen_GTPase_RsgA"/>
</dbReference>
<dbReference type="InterPro" id="IPR010914">
    <property type="entry name" value="RsgA_GTPase_dom"/>
</dbReference>
<dbReference type="NCBIfam" id="NF008931">
    <property type="entry name" value="PRK12288.1"/>
    <property type="match status" value="1"/>
</dbReference>
<dbReference type="NCBIfam" id="TIGR00157">
    <property type="entry name" value="ribosome small subunit-dependent GTPase A"/>
    <property type="match status" value="1"/>
</dbReference>
<dbReference type="PANTHER" id="PTHR32120">
    <property type="entry name" value="SMALL RIBOSOMAL SUBUNIT BIOGENESIS GTPASE RSGA"/>
    <property type="match status" value="1"/>
</dbReference>
<dbReference type="PANTHER" id="PTHR32120:SF11">
    <property type="entry name" value="SMALL RIBOSOMAL SUBUNIT BIOGENESIS GTPASE RSGA 1, MITOCHONDRIAL-RELATED"/>
    <property type="match status" value="1"/>
</dbReference>
<dbReference type="Pfam" id="PF03193">
    <property type="entry name" value="RsgA_GTPase"/>
    <property type="match status" value="1"/>
</dbReference>
<dbReference type="SUPFAM" id="SSF52540">
    <property type="entry name" value="P-loop containing nucleoside triphosphate hydrolases"/>
    <property type="match status" value="1"/>
</dbReference>
<dbReference type="PROSITE" id="PS50936">
    <property type="entry name" value="ENGC_GTPASE"/>
    <property type="match status" value="1"/>
</dbReference>
<dbReference type="PROSITE" id="PS51721">
    <property type="entry name" value="G_CP"/>
    <property type="match status" value="1"/>
</dbReference>
<reference key="1">
    <citation type="journal article" date="2003" name="Genome Res.">
        <title>Comparative genome analysis of Vibrio vulnificus, a marine pathogen.</title>
        <authorList>
            <person name="Chen C.-Y."/>
            <person name="Wu K.-M."/>
            <person name="Chang Y.-C."/>
            <person name="Chang C.-H."/>
            <person name="Tsai H.-C."/>
            <person name="Liao T.-L."/>
            <person name="Liu Y.-M."/>
            <person name="Chen H.-J."/>
            <person name="Shen A.B.-T."/>
            <person name="Li J.-C."/>
            <person name="Su T.-L."/>
            <person name="Shao C.-P."/>
            <person name="Lee C.-T."/>
            <person name="Hor L.-I."/>
            <person name="Tsai S.-F."/>
        </authorList>
    </citation>
    <scope>NUCLEOTIDE SEQUENCE [LARGE SCALE GENOMIC DNA]</scope>
    <source>
        <strain>YJ016</strain>
    </source>
</reference>
<organism>
    <name type="scientific">Vibrio vulnificus (strain YJ016)</name>
    <dbReference type="NCBI Taxonomy" id="196600"/>
    <lineage>
        <taxon>Bacteria</taxon>
        <taxon>Pseudomonadati</taxon>
        <taxon>Pseudomonadota</taxon>
        <taxon>Gammaproteobacteria</taxon>
        <taxon>Vibrionales</taxon>
        <taxon>Vibrionaceae</taxon>
        <taxon>Vibrio</taxon>
    </lineage>
</organism>
<proteinExistence type="inferred from homology"/>
<comment type="function">
    <text evidence="1">One of several proteins that assist in the late maturation steps of the functional core of the 30S ribosomal subunit. Helps release RbfA from mature subunits. May play a role in the assembly of ribosomal proteins into the subunit. Circularly permuted GTPase that catalyzes slow GTP hydrolysis, GTPase activity is stimulated by the 30S ribosomal subunit.</text>
</comment>
<comment type="cofactor">
    <cofactor evidence="1">
        <name>Zn(2+)</name>
        <dbReference type="ChEBI" id="CHEBI:29105"/>
    </cofactor>
    <text evidence="1">Binds 1 zinc ion per subunit.</text>
</comment>
<comment type="subunit">
    <text evidence="1">Monomer. Associates with 30S ribosomal subunit, binds 16S rRNA.</text>
</comment>
<comment type="subcellular location">
    <subcellularLocation>
        <location evidence="1">Cytoplasm</location>
    </subcellularLocation>
</comment>
<comment type="similarity">
    <text evidence="1">Belongs to the TRAFAC class YlqF/YawG GTPase family. RsgA subfamily.</text>
</comment>